<keyword id="KW-0963">Cytoplasm</keyword>
<keyword id="KW-0570">Pentose shunt</keyword>
<keyword id="KW-0704">Schiff base</keyword>
<keyword id="KW-0808">Transferase</keyword>
<proteinExistence type="inferred from homology"/>
<protein>
    <recommendedName>
        <fullName evidence="2">Transaldolase</fullName>
        <ecNumber evidence="2">2.2.1.2</ecNumber>
    </recommendedName>
</protein>
<gene>
    <name evidence="2" type="primary">tal</name>
    <name type="ordered locus">BamMC406_2254</name>
</gene>
<feature type="chain" id="PRO_1000126237" description="Transaldolase">
    <location>
        <begin position="1"/>
        <end position="317"/>
    </location>
</feature>
<feature type="active site" description="Schiff-base intermediate with substrate" evidence="2">
    <location>
        <position position="126"/>
    </location>
</feature>
<organism>
    <name type="scientific">Burkholderia ambifaria (strain MC40-6)</name>
    <dbReference type="NCBI Taxonomy" id="398577"/>
    <lineage>
        <taxon>Bacteria</taxon>
        <taxon>Pseudomonadati</taxon>
        <taxon>Pseudomonadota</taxon>
        <taxon>Betaproteobacteria</taxon>
        <taxon>Burkholderiales</taxon>
        <taxon>Burkholderiaceae</taxon>
        <taxon>Burkholderia</taxon>
        <taxon>Burkholderia cepacia complex</taxon>
    </lineage>
</organism>
<accession>B1YU93</accession>
<comment type="function">
    <text evidence="2">Transaldolase is important for the balance of metabolites in the pentose-phosphate pathway.</text>
</comment>
<comment type="catalytic activity">
    <reaction evidence="2">
        <text>D-sedoheptulose 7-phosphate + D-glyceraldehyde 3-phosphate = D-erythrose 4-phosphate + beta-D-fructose 6-phosphate</text>
        <dbReference type="Rhea" id="RHEA:17053"/>
        <dbReference type="ChEBI" id="CHEBI:16897"/>
        <dbReference type="ChEBI" id="CHEBI:57483"/>
        <dbReference type="ChEBI" id="CHEBI:57634"/>
        <dbReference type="ChEBI" id="CHEBI:59776"/>
        <dbReference type="EC" id="2.2.1.2"/>
    </reaction>
</comment>
<comment type="pathway">
    <text evidence="2">Carbohydrate degradation; pentose phosphate pathway; D-glyceraldehyde 3-phosphate and beta-D-fructose 6-phosphate from D-ribose 5-phosphate and D-xylulose 5-phosphate (non-oxidative stage): step 2/3.</text>
</comment>
<comment type="subunit">
    <text evidence="1">Homodimer.</text>
</comment>
<comment type="subcellular location">
    <subcellularLocation>
        <location evidence="2">Cytoplasm</location>
    </subcellularLocation>
</comment>
<comment type="similarity">
    <text evidence="2">Belongs to the transaldolase family. Type 1 subfamily.</text>
</comment>
<dbReference type="EC" id="2.2.1.2" evidence="2"/>
<dbReference type="EMBL" id="CP001025">
    <property type="protein sequence ID" value="ACB64733.1"/>
    <property type="molecule type" value="Genomic_DNA"/>
</dbReference>
<dbReference type="RefSeq" id="WP_012364379.1">
    <property type="nucleotide sequence ID" value="NC_010551.1"/>
</dbReference>
<dbReference type="SMR" id="B1YU93"/>
<dbReference type="KEGG" id="bac:BamMC406_2254"/>
<dbReference type="HOGENOM" id="CLU_047470_0_1_4"/>
<dbReference type="OrthoDB" id="9809101at2"/>
<dbReference type="UniPathway" id="UPA00115">
    <property type="reaction ID" value="UER00414"/>
</dbReference>
<dbReference type="Proteomes" id="UP000001680">
    <property type="component" value="Chromosome 1"/>
</dbReference>
<dbReference type="GO" id="GO:0005737">
    <property type="term" value="C:cytoplasm"/>
    <property type="evidence" value="ECO:0007669"/>
    <property type="project" value="UniProtKB-SubCell"/>
</dbReference>
<dbReference type="GO" id="GO:0004801">
    <property type="term" value="F:transaldolase activity"/>
    <property type="evidence" value="ECO:0000250"/>
    <property type="project" value="UniProtKB"/>
</dbReference>
<dbReference type="GO" id="GO:0005975">
    <property type="term" value="P:carbohydrate metabolic process"/>
    <property type="evidence" value="ECO:0007669"/>
    <property type="project" value="InterPro"/>
</dbReference>
<dbReference type="GO" id="GO:0006098">
    <property type="term" value="P:pentose-phosphate shunt"/>
    <property type="evidence" value="ECO:0007669"/>
    <property type="project" value="UniProtKB-UniRule"/>
</dbReference>
<dbReference type="CDD" id="cd00957">
    <property type="entry name" value="Transaldolase_TalAB"/>
    <property type="match status" value="1"/>
</dbReference>
<dbReference type="FunFam" id="3.20.20.70:FF:000002">
    <property type="entry name" value="Transaldolase"/>
    <property type="match status" value="1"/>
</dbReference>
<dbReference type="Gene3D" id="3.20.20.70">
    <property type="entry name" value="Aldolase class I"/>
    <property type="match status" value="1"/>
</dbReference>
<dbReference type="HAMAP" id="MF_00492">
    <property type="entry name" value="Transaldolase_1"/>
    <property type="match status" value="1"/>
</dbReference>
<dbReference type="InterPro" id="IPR013785">
    <property type="entry name" value="Aldolase_TIM"/>
</dbReference>
<dbReference type="InterPro" id="IPR001585">
    <property type="entry name" value="TAL/FSA"/>
</dbReference>
<dbReference type="InterPro" id="IPR004730">
    <property type="entry name" value="Transaldolase_1"/>
</dbReference>
<dbReference type="InterPro" id="IPR018225">
    <property type="entry name" value="Transaldolase_AS"/>
</dbReference>
<dbReference type="NCBIfam" id="TIGR00874">
    <property type="entry name" value="talAB"/>
    <property type="match status" value="1"/>
</dbReference>
<dbReference type="PANTHER" id="PTHR10683">
    <property type="entry name" value="TRANSALDOLASE"/>
    <property type="match status" value="1"/>
</dbReference>
<dbReference type="PANTHER" id="PTHR10683:SF18">
    <property type="entry name" value="TRANSALDOLASE"/>
    <property type="match status" value="1"/>
</dbReference>
<dbReference type="Pfam" id="PF00923">
    <property type="entry name" value="TAL_FSA"/>
    <property type="match status" value="1"/>
</dbReference>
<dbReference type="SUPFAM" id="SSF51569">
    <property type="entry name" value="Aldolase"/>
    <property type="match status" value="1"/>
</dbReference>
<dbReference type="PROSITE" id="PS01054">
    <property type="entry name" value="TRANSALDOLASE_1"/>
    <property type="match status" value="1"/>
</dbReference>
<dbReference type="PROSITE" id="PS00958">
    <property type="entry name" value="TRANSALDOLASE_2"/>
    <property type="match status" value="1"/>
</dbReference>
<reference key="1">
    <citation type="submission" date="2008-04" db="EMBL/GenBank/DDBJ databases">
        <title>Complete sequence of chromosome 1 of Burkholderia ambifaria MC40-6.</title>
        <authorList>
            <person name="Copeland A."/>
            <person name="Lucas S."/>
            <person name="Lapidus A."/>
            <person name="Glavina del Rio T."/>
            <person name="Dalin E."/>
            <person name="Tice H."/>
            <person name="Pitluck S."/>
            <person name="Chain P."/>
            <person name="Malfatti S."/>
            <person name="Shin M."/>
            <person name="Vergez L."/>
            <person name="Lang D."/>
            <person name="Schmutz J."/>
            <person name="Larimer F."/>
            <person name="Land M."/>
            <person name="Hauser L."/>
            <person name="Kyrpides N."/>
            <person name="Lykidis A."/>
            <person name="Ramette A."/>
            <person name="Konstantinidis K."/>
            <person name="Tiedje J."/>
            <person name="Richardson P."/>
        </authorList>
    </citation>
    <scope>NUCLEOTIDE SEQUENCE [LARGE SCALE GENOMIC DNA]</scope>
    <source>
        <strain>MC40-6</strain>
    </source>
</reference>
<name>TAL_BURA4</name>
<evidence type="ECO:0000250" key="1"/>
<evidence type="ECO:0000255" key="2">
    <source>
        <dbReference type="HAMAP-Rule" id="MF_00492"/>
    </source>
</evidence>
<sequence>MTTALDQLKQYTTVVADTGDFQQLAQYKPQDATTNPSLILKAVQKDAYKPILEKTVRDHRDEPADFIIDRLLIAFGTEILKLIPGRVSTEVDARLSFDTQRSIDKGRELIKLYEDAGIGRERILIKLASTWEGIRAAEVLQKEGIKCNMTLLFSLVQAAASAEAGAQLISPFVGRIYDWYKKQAGADWDEAKNGGANDPGVQSVRRIYTYYKTFGYNTEVMGASFRTTSQITELAGCDLLTISPDLLQKLQDSNDTVERKLSPDALHDKPTERVAIDEASFRFQLNDEAMATEKLSEGIRVFAADAVKLEKLIDSLR</sequence>